<proteinExistence type="inferred from homology"/>
<name>RL32_XANOR</name>
<gene>
    <name evidence="1" type="primary">rpmF</name>
    <name type="ordered locus">XOO4732</name>
</gene>
<organism>
    <name type="scientific">Xanthomonas oryzae pv. oryzae (strain KACC10331 / KXO85)</name>
    <dbReference type="NCBI Taxonomy" id="291331"/>
    <lineage>
        <taxon>Bacteria</taxon>
        <taxon>Pseudomonadati</taxon>
        <taxon>Pseudomonadota</taxon>
        <taxon>Gammaproteobacteria</taxon>
        <taxon>Lysobacterales</taxon>
        <taxon>Lysobacteraceae</taxon>
        <taxon>Xanthomonas</taxon>
    </lineage>
</organism>
<sequence length="64" mass="7160">MAVQKSRVTPSRRGQRRSHDALTAKQLSTDPTSGEIHLRHHITADGYYRGKKVITTKSSAVQED</sequence>
<feature type="chain" id="PRO_0000296597" description="Large ribosomal subunit protein bL32">
    <location>
        <begin position="1"/>
        <end position="64"/>
    </location>
</feature>
<feature type="region of interest" description="Disordered" evidence="2">
    <location>
        <begin position="1"/>
        <end position="35"/>
    </location>
</feature>
<accession>Q05I49</accession>
<keyword id="KW-1185">Reference proteome</keyword>
<keyword id="KW-0687">Ribonucleoprotein</keyword>
<keyword id="KW-0689">Ribosomal protein</keyword>
<comment type="similarity">
    <text evidence="1">Belongs to the bacterial ribosomal protein bL32 family.</text>
</comment>
<evidence type="ECO:0000255" key="1">
    <source>
        <dbReference type="HAMAP-Rule" id="MF_00340"/>
    </source>
</evidence>
<evidence type="ECO:0000256" key="2">
    <source>
        <dbReference type="SAM" id="MobiDB-lite"/>
    </source>
</evidence>
<evidence type="ECO:0000305" key="3"/>
<reference key="1">
    <citation type="journal article" date="2005" name="Nucleic Acids Res.">
        <title>The genome sequence of Xanthomonas oryzae pathovar oryzae KACC10331, the bacterial blight pathogen of rice.</title>
        <authorList>
            <person name="Lee B.-M."/>
            <person name="Park Y.-J."/>
            <person name="Park D.-S."/>
            <person name="Kang H.-W."/>
            <person name="Kim J.-G."/>
            <person name="Song E.-S."/>
            <person name="Park I.-C."/>
            <person name="Yoon U.-H."/>
            <person name="Hahn J.-H."/>
            <person name="Koo B.-S."/>
            <person name="Lee G.-B."/>
            <person name="Kim H."/>
            <person name="Park H.-S."/>
            <person name="Yoon K.-O."/>
            <person name="Kim J.-H."/>
            <person name="Jung C.-H."/>
            <person name="Koh N.-H."/>
            <person name="Seo J.-S."/>
            <person name="Go S.-J."/>
        </authorList>
    </citation>
    <scope>NUCLEOTIDE SEQUENCE [LARGE SCALE GENOMIC DNA]</scope>
    <source>
        <strain>KACC10331 / KXO85</strain>
    </source>
</reference>
<dbReference type="EMBL" id="AE013598">
    <property type="protein sequence ID" value="ABJ89880.1"/>
    <property type="molecule type" value="Genomic_DNA"/>
</dbReference>
<dbReference type="SMR" id="Q05I49"/>
<dbReference type="STRING" id="291331.XOO4732"/>
<dbReference type="KEGG" id="xoo:XOO4732"/>
<dbReference type="HOGENOM" id="CLU_129084_2_1_6"/>
<dbReference type="Proteomes" id="UP000006735">
    <property type="component" value="Chromosome"/>
</dbReference>
<dbReference type="GO" id="GO:0015934">
    <property type="term" value="C:large ribosomal subunit"/>
    <property type="evidence" value="ECO:0007669"/>
    <property type="project" value="InterPro"/>
</dbReference>
<dbReference type="GO" id="GO:0003735">
    <property type="term" value="F:structural constituent of ribosome"/>
    <property type="evidence" value="ECO:0007669"/>
    <property type="project" value="InterPro"/>
</dbReference>
<dbReference type="GO" id="GO:0006412">
    <property type="term" value="P:translation"/>
    <property type="evidence" value="ECO:0007669"/>
    <property type="project" value="UniProtKB-UniRule"/>
</dbReference>
<dbReference type="HAMAP" id="MF_00340">
    <property type="entry name" value="Ribosomal_bL32"/>
    <property type="match status" value="1"/>
</dbReference>
<dbReference type="InterPro" id="IPR002677">
    <property type="entry name" value="Ribosomal_bL32"/>
</dbReference>
<dbReference type="InterPro" id="IPR044957">
    <property type="entry name" value="Ribosomal_bL32_bact"/>
</dbReference>
<dbReference type="InterPro" id="IPR011332">
    <property type="entry name" value="Ribosomal_zn-bd"/>
</dbReference>
<dbReference type="NCBIfam" id="TIGR01031">
    <property type="entry name" value="rpmF_bact"/>
    <property type="match status" value="1"/>
</dbReference>
<dbReference type="PANTHER" id="PTHR35534">
    <property type="entry name" value="50S RIBOSOMAL PROTEIN L32"/>
    <property type="match status" value="1"/>
</dbReference>
<dbReference type="PANTHER" id="PTHR35534:SF1">
    <property type="entry name" value="LARGE RIBOSOMAL SUBUNIT PROTEIN BL32"/>
    <property type="match status" value="1"/>
</dbReference>
<dbReference type="Pfam" id="PF01783">
    <property type="entry name" value="Ribosomal_L32p"/>
    <property type="match status" value="1"/>
</dbReference>
<dbReference type="SUPFAM" id="SSF57829">
    <property type="entry name" value="Zn-binding ribosomal proteins"/>
    <property type="match status" value="1"/>
</dbReference>
<protein>
    <recommendedName>
        <fullName evidence="1">Large ribosomal subunit protein bL32</fullName>
    </recommendedName>
    <alternativeName>
        <fullName evidence="3">50S ribosomal protein L32</fullName>
    </alternativeName>
</protein>